<name>MOKI_MONPI</name>
<protein>
    <recommendedName>
        <fullName evidence="4">Efflux pump mokI</fullName>
    </recommendedName>
    <alternativeName>
        <fullName evidence="4">Monacolin K biosynthesis protein I</fullName>
    </alternativeName>
</protein>
<proteinExistence type="evidence at protein level"/>
<accession>Q3S2U5</accession>
<evidence type="ECO:0000255" key="1"/>
<evidence type="ECO:0000269" key="2">
    <source>
    </source>
</evidence>
<evidence type="ECO:0000269" key="3">
    <source>
    </source>
</evidence>
<evidence type="ECO:0000303" key="4">
    <source>
    </source>
</evidence>
<evidence type="ECO:0000303" key="5">
    <source>
    </source>
</evidence>
<evidence type="ECO:0000305" key="6"/>
<evidence type="ECO:0000312" key="7">
    <source>
        <dbReference type="EMBL" id="ABA02247.1"/>
    </source>
</evidence>
<comment type="function">
    <text evidence="4 5">Efflux pump; part of the gene cluster that mediates the biosynthesis of monakolin K, also known as lovastatin, and which acts as a potent competitive inhibitor of HMG-CoA reductase (PubMed:18578535, PubMed:19968298).</text>
</comment>
<comment type="subcellular location">
    <subcellularLocation>
        <location evidence="1">Membrane</location>
        <topology evidence="1">Multi-pass membrane protein</topology>
    </subcellularLocation>
</comment>
<comment type="induction">
    <text evidence="2">Expression is controlled by the monacolin K cluster transcription regulator mokH (PubMed:19968298).</text>
</comment>
<comment type="biotechnology">
    <text evidence="3">Monacoline K acts as an inhibitor of HMG-CoA reductase involved in cholesterogenesis (PubMed:21821946). Its hypocholesterolemic activity might be useful for lowering cholesterol levels in the blood and reduce artherosclerosis and coronary heart disease (PubMed:21821946).</text>
</comment>
<comment type="similarity">
    <text evidence="6">Belongs to the major facilitator superfamily. TCR/Tet family.</text>
</comment>
<keyword id="KW-0472">Membrane</keyword>
<keyword id="KW-0812">Transmembrane</keyword>
<keyword id="KW-1133">Transmembrane helix</keyword>
<keyword id="KW-0813">Transport</keyword>
<dbReference type="EMBL" id="DQ176595">
    <property type="protein sequence ID" value="ABA02247.1"/>
    <property type="molecule type" value="Genomic_DNA"/>
</dbReference>
<dbReference type="SMR" id="Q3S2U5"/>
<dbReference type="GO" id="GO:0005886">
    <property type="term" value="C:plasma membrane"/>
    <property type="evidence" value="ECO:0007669"/>
    <property type="project" value="TreeGrafter"/>
</dbReference>
<dbReference type="GO" id="GO:0022857">
    <property type="term" value="F:transmembrane transporter activity"/>
    <property type="evidence" value="ECO:0007669"/>
    <property type="project" value="InterPro"/>
</dbReference>
<dbReference type="CDD" id="cd17502">
    <property type="entry name" value="MFS_Azr1_MDR_like"/>
    <property type="match status" value="1"/>
</dbReference>
<dbReference type="Gene3D" id="1.20.1250.20">
    <property type="entry name" value="MFS general substrate transporter like domains"/>
    <property type="match status" value="2"/>
</dbReference>
<dbReference type="InterPro" id="IPR011701">
    <property type="entry name" value="MFS"/>
</dbReference>
<dbReference type="InterPro" id="IPR020846">
    <property type="entry name" value="MFS_dom"/>
</dbReference>
<dbReference type="InterPro" id="IPR036259">
    <property type="entry name" value="MFS_trans_sf"/>
</dbReference>
<dbReference type="PANTHER" id="PTHR23501">
    <property type="entry name" value="MAJOR FACILITATOR SUPERFAMILY"/>
    <property type="match status" value="1"/>
</dbReference>
<dbReference type="PANTHER" id="PTHR23501:SF193">
    <property type="entry name" value="MULTIDRUG TRANSPORTER, PUTATIVE (AFU_ORTHOLOGUE AFUA_8G00940)-RELATED"/>
    <property type="match status" value="1"/>
</dbReference>
<dbReference type="Pfam" id="PF07690">
    <property type="entry name" value="MFS_1"/>
    <property type="match status" value="2"/>
</dbReference>
<dbReference type="SUPFAM" id="SSF103473">
    <property type="entry name" value="MFS general substrate transporter"/>
    <property type="match status" value="2"/>
</dbReference>
<dbReference type="PROSITE" id="PS50850">
    <property type="entry name" value="MFS"/>
    <property type="match status" value="1"/>
</dbReference>
<gene>
    <name evidence="4" type="primary">mokI</name>
</gene>
<reference key="1">
    <citation type="journal article" date="2008" name="J. Agric. Food Chem.">
        <title>Cloning and characterization of monacolin K biosynthetic gene cluster from Monascus pilosus.</title>
        <authorList>
            <person name="Chen Y.P."/>
            <person name="Tseng C.P."/>
            <person name="Liaw L.L."/>
            <person name="Wang C.L."/>
            <person name="Chen I.C."/>
            <person name="Wu W.J."/>
            <person name="Wu M.D."/>
            <person name="Yuan G.F."/>
        </authorList>
    </citation>
    <scope>NUCLEOTIDE SEQUENCE [GENOMIC DNA]</scope>
    <scope>FUNCTION</scope>
</reference>
<reference key="2">
    <citation type="journal article" date="2010" name="J. Agric. Food Chem.">
        <title>Identification of the mokH gene encoding transcription factor for the upregulation of monacolin K biosynthesis in Monascus pilosus.</title>
        <authorList>
            <person name="Chen Y.-P."/>
            <person name="Yuan G.-F."/>
            <person name="Hsieh S.-Y."/>
            <person name="Lin Y.-S."/>
            <person name="Wang W.-Y."/>
            <person name="Liaw L.-L."/>
            <person name="Tseng C.-P."/>
        </authorList>
    </citation>
    <scope>INDUCTION</scope>
</reference>
<reference key="3">
    <citation type="journal article" date="2011" name="Biosci. Biotechnol. Biochem.">
        <title>Simultaneous enrichment of deglycosylated ginsenosides and monacolin K in red ginseng by fermentation with Monascus pilosus.</title>
        <authorList>
            <person name="Hong S.Y."/>
            <person name="Oh J.H."/>
            <person name="Lee I."/>
        </authorList>
    </citation>
    <scope>BIOTECHNOLOGY</scope>
</reference>
<feature type="chain" id="PRO_0000436293" description="Efflux pump mokI">
    <location>
        <begin position="1"/>
        <end position="543"/>
    </location>
</feature>
<feature type="transmembrane region" description="Helical" evidence="1">
    <location>
        <begin position="30"/>
        <end position="50"/>
    </location>
</feature>
<feature type="transmembrane region" description="Helical" evidence="1">
    <location>
        <begin position="90"/>
        <end position="110"/>
    </location>
</feature>
<feature type="transmembrane region" description="Helical" evidence="1">
    <location>
        <begin position="125"/>
        <end position="145"/>
    </location>
</feature>
<feature type="transmembrane region" description="Helical" evidence="1">
    <location>
        <begin position="153"/>
        <end position="173"/>
    </location>
</feature>
<feature type="transmembrane region" description="Helical" evidence="1">
    <location>
        <begin position="185"/>
        <end position="205"/>
    </location>
</feature>
<feature type="transmembrane region" description="Helical" evidence="1">
    <location>
        <begin position="233"/>
        <end position="253"/>
    </location>
</feature>
<feature type="transmembrane region" description="Helical" evidence="1">
    <location>
        <begin position="261"/>
        <end position="281"/>
    </location>
</feature>
<feature type="transmembrane region" description="Helical" evidence="1">
    <location>
        <begin position="307"/>
        <end position="327"/>
    </location>
</feature>
<feature type="transmembrane region" description="Helical" evidence="1">
    <location>
        <begin position="340"/>
        <end position="360"/>
    </location>
</feature>
<feature type="transmembrane region" description="Helical" evidence="1">
    <location>
        <begin position="364"/>
        <end position="384"/>
    </location>
</feature>
<feature type="transmembrane region" description="Helical" evidence="1">
    <location>
        <begin position="394"/>
        <end position="416"/>
    </location>
</feature>
<feature type="transmembrane region" description="Helical" evidence="1">
    <location>
        <begin position="428"/>
        <end position="448"/>
    </location>
</feature>
<feature type="transmembrane region" description="Helical" evidence="1">
    <location>
        <begin position="509"/>
        <end position="529"/>
    </location>
</feature>
<organism evidence="7">
    <name type="scientific">Monascus pilosus</name>
    <name type="common">Red mold</name>
    <dbReference type="NCBI Taxonomy" id="89488"/>
    <lineage>
        <taxon>Eukaryota</taxon>
        <taxon>Fungi</taxon>
        <taxon>Dikarya</taxon>
        <taxon>Ascomycota</taxon>
        <taxon>Pezizomycotina</taxon>
        <taxon>Eurotiomycetes</taxon>
        <taxon>Eurotiomycetidae</taxon>
        <taxon>Eurotiales</taxon>
        <taxon>Aspergillaceae</taxon>
        <taxon>Monascus</taxon>
    </lineage>
</organism>
<sequence length="543" mass="57408">MASHQSEKEKPQSCTTEVQVSHVTGLKLGLVVTSVTLVVFLMLLDMSIIVTAIPHITAQFHSLGDVGWYGSAYLLSSCALQPLAGKLYTLLTLKYTFLAFLGVFEVGSALCGAARCSTMLIVGRAVAGMGGSGLTNGAITILASAAPKQQQPLLIGIMMGLSQIAIVCGPLLGGAFTQHASWRWCFYINLPVGALAAILLLAIHIPKSVPTSDCTMPAPRAVGVRVILSQLDLLGFVLFAAFAVMISLALEWGGSDYMWDSSVIIGLFCGAGISLVVFGFWERYVGNSMAMIPFSVASRRQVWCSCLFLGFFSGALLTFSYYLPIYFQAVKDVSPTMSGVYMLPGIGGQIVMAIVSGAIIGKTGYYIPWALASGIIVSISAGLVSTFQPHTSIAAWVMYQFMGGFGRGCGMQTPIIAIQHALPPQMSALGISLAMFGQTFGGSLFLTLAKLVFSAGLDAGLREYAPAVSAEAVTAAGATGFRDVVPANLLSQVLLAYCKGIDHTFYLAVGASGATFLFAWGMGQVGLIWWGEERTGFGRDERV</sequence>